<evidence type="ECO:0000255" key="1"/>
<evidence type="ECO:0000269" key="2">
    <source>
    </source>
</evidence>
<evidence type="ECO:0000269" key="3">
    <source>
    </source>
</evidence>
<evidence type="ECO:0000269" key="4">
    <source>
    </source>
</evidence>
<evidence type="ECO:0000305" key="5"/>
<proteinExistence type="evidence at transcript level"/>
<keyword id="KW-0472">Membrane</keyword>
<keyword id="KW-1185">Reference proteome</keyword>
<keyword id="KW-0812">Transmembrane</keyword>
<keyword id="KW-1133">Transmembrane helix</keyword>
<organism>
    <name type="scientific">Arabidopsis thaliana</name>
    <name type="common">Mouse-ear cress</name>
    <dbReference type="NCBI Taxonomy" id="3702"/>
    <lineage>
        <taxon>Eukaryota</taxon>
        <taxon>Viridiplantae</taxon>
        <taxon>Streptophyta</taxon>
        <taxon>Embryophyta</taxon>
        <taxon>Tracheophyta</taxon>
        <taxon>Spermatophyta</taxon>
        <taxon>Magnoliopsida</taxon>
        <taxon>eudicotyledons</taxon>
        <taxon>Gunneridae</taxon>
        <taxon>Pentapetalae</taxon>
        <taxon>rosids</taxon>
        <taxon>malvids</taxon>
        <taxon>Brassicales</taxon>
        <taxon>Brassicaceae</taxon>
        <taxon>Camelineae</taxon>
        <taxon>Arabidopsis</taxon>
    </lineage>
</organism>
<dbReference type="EMBL" id="AB006698">
    <property type="protein sequence ID" value="BAB08250.1"/>
    <property type="molecule type" value="Genomic_DNA"/>
</dbReference>
<dbReference type="EMBL" id="CP002688">
    <property type="protein sequence ID" value="AED95332.1"/>
    <property type="molecule type" value="Genomic_DNA"/>
</dbReference>
<dbReference type="EMBL" id="AY150511">
    <property type="protein sequence ID" value="AAN13027.1"/>
    <property type="molecule type" value="mRNA"/>
</dbReference>
<dbReference type="EMBL" id="AY064057">
    <property type="protein sequence ID" value="AAL36413.1"/>
    <property type="molecule type" value="mRNA"/>
</dbReference>
<dbReference type="SMR" id="Q9FNL7"/>
<dbReference type="FunCoup" id="Q9FNL7">
    <property type="interactions" value="1661"/>
</dbReference>
<dbReference type="STRING" id="3702.Q9FNL7"/>
<dbReference type="TCDB" id="2.A.17.3.4">
    <property type="family name" value="the proton-dependent oligopeptide transporter (pot/ptr) family"/>
</dbReference>
<dbReference type="GlyGen" id="Q9FNL7">
    <property type="glycosylation" value="1 site"/>
</dbReference>
<dbReference type="iPTMnet" id="Q9FNL7"/>
<dbReference type="PaxDb" id="3702-AT5G46050.1"/>
<dbReference type="ProteomicsDB" id="226438"/>
<dbReference type="EnsemblPlants" id="AT5G46050.1">
    <property type="protein sequence ID" value="AT5G46050.1"/>
    <property type="gene ID" value="AT5G46050"/>
</dbReference>
<dbReference type="GeneID" id="834646"/>
<dbReference type="Gramene" id="AT5G46050.1">
    <property type="protein sequence ID" value="AT5G46050.1"/>
    <property type="gene ID" value="AT5G46050"/>
</dbReference>
<dbReference type="KEGG" id="ath:AT5G46050"/>
<dbReference type="Araport" id="AT5G46050"/>
<dbReference type="TAIR" id="AT5G46050">
    <property type="gene designation" value="NPF5.2"/>
</dbReference>
<dbReference type="eggNOG" id="KOG1237">
    <property type="taxonomic scope" value="Eukaryota"/>
</dbReference>
<dbReference type="HOGENOM" id="CLU_009313_0_1_1"/>
<dbReference type="InParanoid" id="Q9FNL7"/>
<dbReference type="OMA" id="SNLTQMC"/>
<dbReference type="OrthoDB" id="8904098at2759"/>
<dbReference type="PhylomeDB" id="Q9FNL7"/>
<dbReference type="PRO" id="PR:Q9FNL7"/>
<dbReference type="Proteomes" id="UP000006548">
    <property type="component" value="Chromosome 5"/>
</dbReference>
<dbReference type="ExpressionAtlas" id="Q9FNL7">
    <property type="expression patterns" value="baseline and differential"/>
</dbReference>
<dbReference type="GO" id="GO:0016020">
    <property type="term" value="C:membrane"/>
    <property type="evidence" value="ECO:0007669"/>
    <property type="project" value="UniProtKB-SubCell"/>
</dbReference>
<dbReference type="GO" id="GO:0071916">
    <property type="term" value="F:dipeptide transmembrane transporter activity"/>
    <property type="evidence" value="ECO:0000316"/>
    <property type="project" value="TAIR"/>
</dbReference>
<dbReference type="GO" id="GO:0042937">
    <property type="term" value="F:tripeptide transmembrane transporter activity"/>
    <property type="evidence" value="ECO:0000316"/>
    <property type="project" value="TAIR"/>
</dbReference>
<dbReference type="GO" id="GO:0042742">
    <property type="term" value="P:defense response to bacterium"/>
    <property type="evidence" value="ECO:0000315"/>
    <property type="project" value="TAIR"/>
</dbReference>
<dbReference type="GO" id="GO:0042938">
    <property type="term" value="P:dipeptide transport"/>
    <property type="evidence" value="ECO:0000316"/>
    <property type="project" value="TAIR"/>
</dbReference>
<dbReference type="GO" id="GO:0042538">
    <property type="term" value="P:hyperosmotic salinity response"/>
    <property type="evidence" value="ECO:0000315"/>
    <property type="project" value="TAIR"/>
</dbReference>
<dbReference type="GO" id="GO:0009737">
    <property type="term" value="P:response to abscisic acid"/>
    <property type="evidence" value="ECO:0000270"/>
    <property type="project" value="TAIR"/>
</dbReference>
<dbReference type="GO" id="GO:0080052">
    <property type="term" value="P:response to histidine"/>
    <property type="evidence" value="ECO:0000270"/>
    <property type="project" value="TAIR"/>
</dbReference>
<dbReference type="GO" id="GO:0009753">
    <property type="term" value="P:response to jasmonic acid"/>
    <property type="evidence" value="ECO:0000270"/>
    <property type="project" value="TAIR"/>
</dbReference>
<dbReference type="GO" id="GO:0043201">
    <property type="term" value="P:response to L-leucine"/>
    <property type="evidence" value="ECO:0000270"/>
    <property type="project" value="TAIR"/>
</dbReference>
<dbReference type="GO" id="GO:0080053">
    <property type="term" value="P:response to phenylalanine"/>
    <property type="evidence" value="ECO:0000270"/>
    <property type="project" value="TAIR"/>
</dbReference>
<dbReference type="GO" id="GO:0009751">
    <property type="term" value="P:response to salicylic acid"/>
    <property type="evidence" value="ECO:0000270"/>
    <property type="project" value="TAIR"/>
</dbReference>
<dbReference type="GO" id="GO:0009611">
    <property type="term" value="P:response to wounding"/>
    <property type="evidence" value="ECO:0000270"/>
    <property type="project" value="TAIR"/>
</dbReference>
<dbReference type="GO" id="GO:0042939">
    <property type="term" value="P:tripeptide transport"/>
    <property type="evidence" value="ECO:0000316"/>
    <property type="project" value="TAIR"/>
</dbReference>
<dbReference type="CDD" id="cd17417">
    <property type="entry name" value="MFS_NPF5"/>
    <property type="match status" value="1"/>
</dbReference>
<dbReference type="Gene3D" id="1.20.1250.20">
    <property type="entry name" value="MFS general substrate transporter like domains"/>
    <property type="match status" value="1"/>
</dbReference>
<dbReference type="InterPro" id="IPR036259">
    <property type="entry name" value="MFS_trans_sf"/>
</dbReference>
<dbReference type="InterPro" id="IPR044739">
    <property type="entry name" value="NRT1/PTR"/>
</dbReference>
<dbReference type="InterPro" id="IPR000109">
    <property type="entry name" value="POT_fam"/>
</dbReference>
<dbReference type="PANTHER" id="PTHR11654">
    <property type="entry name" value="OLIGOPEPTIDE TRANSPORTER-RELATED"/>
    <property type="match status" value="1"/>
</dbReference>
<dbReference type="Pfam" id="PF00854">
    <property type="entry name" value="PTR2"/>
    <property type="match status" value="1"/>
</dbReference>
<dbReference type="SUPFAM" id="SSF103473">
    <property type="entry name" value="MFS general substrate transporter"/>
    <property type="match status" value="1"/>
</dbReference>
<reference key="1">
    <citation type="journal article" date="1997" name="DNA Res.">
        <title>Structural analysis of Arabidopsis thaliana chromosome 5. II. Sequence features of the regions of 1,044,062 bp covered by thirteen physically assigned P1 clones.</title>
        <authorList>
            <person name="Kotani H."/>
            <person name="Nakamura Y."/>
            <person name="Sato S."/>
            <person name="Kaneko T."/>
            <person name="Asamizu E."/>
            <person name="Miyajima N."/>
            <person name="Tabata S."/>
        </authorList>
    </citation>
    <scope>NUCLEOTIDE SEQUENCE [LARGE SCALE GENOMIC DNA]</scope>
    <source>
        <strain>cv. Columbia</strain>
    </source>
</reference>
<reference key="2">
    <citation type="journal article" date="2017" name="Plant J.">
        <title>Araport11: a complete reannotation of the Arabidopsis thaliana reference genome.</title>
        <authorList>
            <person name="Cheng C.Y."/>
            <person name="Krishnakumar V."/>
            <person name="Chan A.P."/>
            <person name="Thibaud-Nissen F."/>
            <person name="Schobel S."/>
            <person name="Town C.D."/>
        </authorList>
    </citation>
    <scope>GENOME REANNOTATION</scope>
    <source>
        <strain>cv. Columbia</strain>
    </source>
</reference>
<reference key="3">
    <citation type="journal article" date="2003" name="Science">
        <title>Empirical analysis of transcriptional activity in the Arabidopsis genome.</title>
        <authorList>
            <person name="Yamada K."/>
            <person name="Lim J."/>
            <person name="Dale J.M."/>
            <person name="Chen H."/>
            <person name="Shinn P."/>
            <person name="Palm C.J."/>
            <person name="Southwick A.M."/>
            <person name="Wu H.C."/>
            <person name="Kim C.J."/>
            <person name="Nguyen M."/>
            <person name="Pham P.K."/>
            <person name="Cheuk R.F."/>
            <person name="Karlin-Newmann G."/>
            <person name="Liu S.X."/>
            <person name="Lam B."/>
            <person name="Sakano H."/>
            <person name="Wu T."/>
            <person name="Yu G."/>
            <person name="Miranda M."/>
            <person name="Quach H.L."/>
            <person name="Tripp M."/>
            <person name="Chang C.H."/>
            <person name="Lee J.M."/>
            <person name="Toriumi M.J."/>
            <person name="Chan M.M."/>
            <person name="Tang C.C."/>
            <person name="Onodera C.S."/>
            <person name="Deng J.M."/>
            <person name="Akiyama K."/>
            <person name="Ansari Y."/>
            <person name="Arakawa T."/>
            <person name="Banh J."/>
            <person name="Banno F."/>
            <person name="Bowser L."/>
            <person name="Brooks S.Y."/>
            <person name="Carninci P."/>
            <person name="Chao Q."/>
            <person name="Choy N."/>
            <person name="Enju A."/>
            <person name="Goldsmith A.D."/>
            <person name="Gurjal M."/>
            <person name="Hansen N.F."/>
            <person name="Hayashizaki Y."/>
            <person name="Johnson-Hopson C."/>
            <person name="Hsuan V.W."/>
            <person name="Iida K."/>
            <person name="Karnes M."/>
            <person name="Khan S."/>
            <person name="Koesema E."/>
            <person name="Ishida J."/>
            <person name="Jiang P.X."/>
            <person name="Jones T."/>
            <person name="Kawai J."/>
            <person name="Kamiya A."/>
            <person name="Meyers C."/>
            <person name="Nakajima M."/>
            <person name="Narusaka M."/>
            <person name="Seki M."/>
            <person name="Sakurai T."/>
            <person name="Satou M."/>
            <person name="Tamse R."/>
            <person name="Vaysberg M."/>
            <person name="Wallender E.K."/>
            <person name="Wong C."/>
            <person name="Yamamura Y."/>
            <person name="Yuan S."/>
            <person name="Shinozaki K."/>
            <person name="Davis R.W."/>
            <person name="Theologis A."/>
            <person name="Ecker J.R."/>
        </authorList>
    </citation>
    <scope>NUCLEOTIDE SEQUENCE [LARGE SCALE MRNA]</scope>
    <source>
        <strain>cv. Columbia</strain>
    </source>
</reference>
<reference key="4">
    <citation type="journal article" date="2005" name="J. Mol. Model.">
        <title>Structural and functional characterization of AtPTR3, a stress-induced peptide transporter of Arabidopsis.</title>
        <authorList>
            <person name="Karim S."/>
            <person name="Lundh D."/>
            <person name="Holmstroem K.-O."/>
            <person name="Mandal A."/>
            <person name="Pirhonen M."/>
        </authorList>
    </citation>
    <scope>INDUCTION BY WOUNDING; AMINO ACIDS AND SALT</scope>
    <scope>FUNCTION</scope>
    <source>
        <strain>cv. C24</strain>
    </source>
</reference>
<reference key="5">
    <citation type="journal article" date="2007" name="FEBS Lett.">
        <title>Nitrate transporters and peptide transporters.</title>
        <authorList>
            <person name="Tsay Y.F."/>
            <person name="Chiu C.C."/>
            <person name="Tsai C.B."/>
            <person name="Ho C.H."/>
            <person name="Hsu P.K."/>
        </authorList>
    </citation>
    <scope>TISSUE SPECIFICITY</scope>
    <scope>GENE FAMILY</scope>
</reference>
<reference key="6">
    <citation type="journal article" date="2007" name="Planta">
        <title>AtPTR3, a wound-induced peptide transporter needed for defence against virulent bacterial pathogens in Arabidopsis.</title>
        <authorList>
            <person name="Karim S."/>
            <person name="Holmstroem K.-O."/>
            <person name="Mandal A."/>
            <person name="Dahl P."/>
            <person name="Hohmann S."/>
            <person name="Brader G."/>
            <person name="Palva E.T."/>
            <person name="Pirhonen M."/>
        </authorList>
    </citation>
    <scope>INDUCTION BY SALT; SALICYLIC ACIDS; ABSCISIC ACID AND METHYL JASMONATE</scope>
    <scope>FUNCTION</scope>
</reference>
<reference key="7">
    <citation type="journal article" date="2014" name="Trends Plant Sci.">
        <title>A unified nomenclature of NITRATE TRANSPORTER 1/PEPTIDE TRANSPORTER family members in plants.</title>
        <authorList>
            <person name="Leran S."/>
            <person name="Varala K."/>
            <person name="Boyer J.C."/>
            <person name="Chiurazzi M."/>
            <person name="Crawford N."/>
            <person name="Daniel-Vedele F."/>
            <person name="David L."/>
            <person name="Dickstein R."/>
            <person name="Fernandez E."/>
            <person name="Forde B."/>
            <person name="Gassmann W."/>
            <person name="Geiger D."/>
            <person name="Gojon A."/>
            <person name="Gong J.M."/>
            <person name="Halkier B.A."/>
            <person name="Harris J.M."/>
            <person name="Hedrich R."/>
            <person name="Limami A.M."/>
            <person name="Rentsch D."/>
            <person name="Seo M."/>
            <person name="Tsay Y.F."/>
            <person name="Zhang M."/>
            <person name="Coruzzi G."/>
            <person name="Lacombe B."/>
        </authorList>
    </citation>
    <scope>GENE FAMILY</scope>
    <scope>NOMENCLATURE</scope>
</reference>
<comment type="function">
    <text evidence="2 3">Peptide transporter involved in stress tolerance in seeds during germination and in defense against virulent bacterial pathogens.</text>
</comment>
<comment type="subcellular location">
    <subcellularLocation>
        <location evidence="5">Membrane</location>
        <topology evidence="5">Multi-pass membrane protein</topology>
    </subcellularLocation>
</comment>
<comment type="tissue specificity">
    <text evidence="4">Expressed in roots. Detected in shoots, leaves and flowers.</text>
</comment>
<comment type="induction">
    <text evidence="2 3">By wounding, salicylic acid, abscisic acid, methyl jasmonate, salt treatment and amino acids histidine, leucine and phenylalanine. No induction by glutamic acid, methionine or tryptophan.</text>
</comment>
<comment type="similarity">
    <text evidence="5">Belongs to the major facilitator superfamily. Proton-dependent oligopeptide transporter (POT/PTR) (TC 2.A.17) family.</text>
</comment>
<gene>
    <name type="primary">NPF5.2</name>
    <name type="synonym">PTR3-A</name>
    <name type="ordered locus">At5g46050</name>
    <name type="ORF">MCL19.10</name>
</gene>
<name>PTR3_ARATH</name>
<protein>
    <recommendedName>
        <fullName>Protein NRT1/ PTR FAMILY 5.2</fullName>
        <shortName>AtNPF5.2</shortName>
    </recommendedName>
    <alternativeName>
        <fullName>Peptide transporter PTR3-A</fullName>
        <shortName>AtPTR3</shortName>
    </alternativeName>
</protein>
<feature type="chain" id="PRO_0000300100" description="Protein NRT1/ PTR FAMILY 5.2">
    <location>
        <begin position="1"/>
        <end position="582"/>
    </location>
</feature>
<feature type="transmembrane region" description="Helical" evidence="1">
    <location>
        <begin position="77"/>
        <end position="97"/>
    </location>
</feature>
<feature type="transmembrane region" description="Helical" evidence="1">
    <location>
        <begin position="100"/>
        <end position="120"/>
    </location>
</feature>
<feature type="transmembrane region" description="Helical" evidence="1">
    <location>
        <begin position="141"/>
        <end position="161"/>
    </location>
</feature>
<feature type="transmembrane region" description="Helical" evidence="1">
    <location>
        <begin position="189"/>
        <end position="209"/>
    </location>
</feature>
<feature type="transmembrane region" description="Helical" evidence="1">
    <location>
        <begin position="217"/>
        <end position="237"/>
    </location>
</feature>
<feature type="transmembrane region" description="Helical" evidence="1">
    <location>
        <begin position="334"/>
        <end position="354"/>
    </location>
</feature>
<feature type="transmembrane region" description="Helical" evidence="1">
    <location>
        <begin position="370"/>
        <end position="390"/>
    </location>
</feature>
<feature type="transmembrane region" description="Helical" evidence="1">
    <location>
        <begin position="408"/>
        <end position="428"/>
    </location>
</feature>
<feature type="transmembrane region" description="Helical" evidence="1">
    <location>
        <begin position="452"/>
        <end position="472"/>
    </location>
</feature>
<feature type="transmembrane region" description="Helical" evidence="1">
    <location>
        <begin position="493"/>
        <end position="515"/>
    </location>
</feature>
<feature type="transmembrane region" description="Helical" evidence="1">
    <location>
        <begin position="538"/>
        <end position="558"/>
    </location>
</feature>
<feature type="sequence conflict" description="In Ref. 3; AAL36413." evidence="5" ref="3">
    <original>V</original>
    <variation>I</variation>
    <location>
        <position position="552"/>
    </location>
</feature>
<accession>Q9FNL7</accession>
<accession>Q8VZK3</accession>
<sequence>MTVEEVGDDYTKDGTVDLQGNPVRRSIRGRWKACSFVVVYEVFERMAYYGISSNLFIYMTTKLHQGTVKSSNNVTNWVGTSWLTPILGAYVGDALLGRYITFVISCAIYFSGMMVLTLSVTIPGIKPPECSTTNVENCEKASVLQLAVFFGALYTLAIGTGGTKPNISTIGADQFDVFDPKEKTQKLSFFNWWMFSIFFGTLFANTVLVYVQDNVGWTLGYGLPTLGLAISITIFLLGTPFYRHKLPTGSPFTKMARVIVASFRKANAPMTHDITSFHELPSLEYERKGAFPIHPTPSLRFLDRASLKTGTNHKWNLCTTTEVEETKQMLRMLPVLFITFVPSMMLAQINTLFVKQGTTLDRKVTGSFSIPPASLSGFVTLSMLISIVLYDRVFVKITRKFTGNPRGITLLQRMGIGLIFHILIMIVASVTERYRLKVAADHGLIHQTGVKLPLTIFALLPQFVLMGMADSFLEVAKLEFFYDQAPESMKSLGTSYSTTSLAIGNFMSSFLLSTVSEITKKRGRGWILNNLNESRLDYYYLFFAVLNLVNFVLFLVVVKFYVYRAEVTDSVDVKEVEMKETE</sequence>